<comment type="function">
    <text>Acts as a ribosome receptor and mediates interaction between the ribosome and the endoplasmic reticulum membrane.</text>
</comment>
<comment type="subcellular location">
    <subcellularLocation>
        <location evidence="5">Endoplasmic reticulum membrane</location>
        <topology evidence="5">Single-pass type III membrane protein</topology>
    </subcellularLocation>
</comment>
<reference key="1">
    <citation type="journal article" date="1995" name="J. Cell Biol.">
        <title>Functional characterization of the 180 kDa ribosome receptor in vivo.</title>
        <authorList>
            <person name="Wanker E.E."/>
            <person name="Sun Y."/>
            <person name="Savitz A.J."/>
            <person name="Meyer D.I."/>
        </authorList>
    </citation>
    <scope>NUCLEOTIDE SEQUENCE [MRNA]</scope>
    <scope>SUBCELLULAR LOCATION</scope>
    <source>
        <strain>Cocker spaniel</strain>
        <tissue>Kidney</tissue>
    </source>
</reference>
<sequence>MDIYDTQTLGVMVFGGFMVVSAIGIFLVSTFSMKETSYEEALANQRKEMAKTHHQKVEKKKKEKTVEKKGKTKKKEEKPNGKIPDHEPAPNVTILLKDPVRAPAVPVAPTPVQPPVVIAPVATVPAMPQEKLAPSPKDKKKKEKKVAKVEPAVSSVVNSVQVLASKAAILETAPKEVPMVVVPPVGAKAGTPATSTAQGKKAEGAQNQSRKAEGAPNQGKKAEGALNQGKKAEGAQNQGKKVEVAPNQGKKAEGGQNQGKKVEGAQNQGKKAEGTPNQGKKAEGAPNQGKKTDGAPNQGKKSEGAPNQGKKAEGAQNQGKKVEVAPNQGKKAEGGQNQGKKVEGAQNQGKKAEGTPNQGKKAEGAPNQGKKTDGAPNQGKKSEGAPNQGKKVEGAQNQGKKVEGVQNQGKKAEGAQNQGKKAEGTSSQGRKEEGTPNLGKKAEGSPNQGKKVEVVQNQSKKVEGAPNQGKKAEGSQNQGKKTEGASNQGKKVDGAQNQGKKAEGAPNQGKKVEGAQNQGKKAEGTPNQGKKAEGAQNQGKKAEGAPNQGKKAEGAPNQGKKAEGAPNQGKKAEGAPNQGKKAEAAPNQGKKAEGAPNQGKKAEGAPNQGKKAEAAPNQGKKAEGAPNQGKKAEGAPNQGKKAEGAPNQGKKAEGAQNQGKKAEGAPNQGKKADLVANQGTKAEGVAGQGKKAEGAPNQGKKGEGTPNQGKKSEGSPNQGKKVDASANQSKRAESAPIQGKNADMVQSQEAPKQEAPAKKKSGSKKKGEPGPPDSDSPLYLPYKTLVSTVGSMVFNEGEAQRLIEILSEKAGVIQDTWHKATQKGDPVAILKRQLEEKEKLLATEQEDAAVAKSKLREVNKELAAEKAKAAAGEAKVKKQLVAREQEITAVQARIEASYREHVKEVQQLQGKIRTLQEQLENGPNTQLARLQQENSILRDALNQATSQVESKQNTELAKLRQELSKVSKELVEKSEAARQEEQQRKALETKTAALEKQVLQLQASHKESEEALQKRLDEVSRELCRSQTSHASLRADAEKAQEQQQQMAELHSKLQSSEAEVKSKSEELSGLHGQLKEARAENSQLMERIRSIEALLEAGQARDTQDAQASRAEHQARLKELESQVWCLEKEATELKEAVEQQKVKNNDLREKNWKAMEALASAERACEEKLRSLTQAKEESEKQLSLTEAQTKEALLALLPALSSSAPQSYTEWLQELREKGPELLKQRPADTDPSSDLASKLREAEETQNNLQAECDQYRTILAETEGMLKDLQKSVEEEEQVWKAKVSATEEELQKSRVTVKHLEDIVEKLKGELESSEQVREHTSHLEAELEKHMAAASAECQSYAKEVAGLRQLLLESQSQLDAAKSEAQKQSNELALVRQQLSEMKSHVEDGDVAGSPAAPPAEQDPVELKAQLERTEATLEDEQALRRKLTAEFQEAQSSACRLQAELEKLRSTGPLESSAAEEATQLKERLEKEKKLTSDLGHAATKLQELLKTTQEQLAKERDTVKKLQEQLDKTDDSSSKEGTSV</sequence>
<feature type="chain" id="PRO_0000097440" description="Ribosome-binding protein 1">
    <location>
        <begin position="1"/>
        <end position="1534"/>
    </location>
</feature>
<feature type="topological domain" description="Lumenal" evidence="3">
    <location>
        <begin position="1"/>
        <end position="7"/>
    </location>
</feature>
<feature type="transmembrane region" description="Helical" evidence="3">
    <location>
        <begin position="8"/>
        <end position="28"/>
    </location>
</feature>
<feature type="topological domain" description="Cytoplasmic" evidence="3">
    <location>
        <begin position="29"/>
        <end position="1534"/>
    </location>
</feature>
<feature type="repeat" description="1">
    <location>
        <begin position="197"/>
        <end position="206"/>
    </location>
</feature>
<feature type="repeat" description="2">
    <location>
        <begin position="207"/>
        <end position="216"/>
    </location>
</feature>
<feature type="repeat" description="3">
    <location>
        <begin position="217"/>
        <end position="226"/>
    </location>
</feature>
<feature type="repeat" description="4">
    <location>
        <begin position="227"/>
        <end position="236"/>
    </location>
</feature>
<feature type="repeat" description="5">
    <location>
        <begin position="237"/>
        <end position="246"/>
    </location>
</feature>
<feature type="repeat" description="6">
    <location>
        <begin position="247"/>
        <end position="256"/>
    </location>
</feature>
<feature type="repeat" description="7">
    <location>
        <begin position="257"/>
        <end position="266"/>
    </location>
</feature>
<feature type="repeat" description="8">
    <location>
        <begin position="267"/>
        <end position="276"/>
    </location>
</feature>
<feature type="repeat" description="9">
    <location>
        <begin position="277"/>
        <end position="286"/>
    </location>
</feature>
<feature type="repeat" description="10">
    <location>
        <begin position="287"/>
        <end position="296"/>
    </location>
</feature>
<feature type="repeat" description="11">
    <location>
        <begin position="297"/>
        <end position="306"/>
    </location>
</feature>
<feature type="repeat" description="12">
    <location>
        <begin position="307"/>
        <end position="316"/>
    </location>
</feature>
<feature type="repeat" description="13">
    <location>
        <begin position="317"/>
        <end position="326"/>
    </location>
</feature>
<feature type="repeat" description="14">
    <location>
        <begin position="327"/>
        <end position="336"/>
    </location>
</feature>
<feature type="repeat" description="15">
    <location>
        <begin position="337"/>
        <end position="346"/>
    </location>
</feature>
<feature type="repeat" description="16">
    <location>
        <begin position="347"/>
        <end position="356"/>
    </location>
</feature>
<feature type="repeat" description="17">
    <location>
        <begin position="357"/>
        <end position="366"/>
    </location>
</feature>
<feature type="repeat" description="18">
    <location>
        <begin position="367"/>
        <end position="376"/>
    </location>
</feature>
<feature type="repeat" description="19">
    <location>
        <begin position="377"/>
        <end position="386"/>
    </location>
</feature>
<feature type="repeat" description="20">
    <location>
        <begin position="387"/>
        <end position="396"/>
    </location>
</feature>
<feature type="repeat" description="21">
    <location>
        <begin position="397"/>
        <end position="406"/>
    </location>
</feature>
<feature type="repeat" description="22">
    <location>
        <begin position="407"/>
        <end position="416"/>
    </location>
</feature>
<feature type="repeat" description="23">
    <location>
        <begin position="417"/>
        <end position="426"/>
    </location>
</feature>
<feature type="repeat" description="24">
    <location>
        <begin position="427"/>
        <end position="436"/>
    </location>
</feature>
<feature type="repeat" description="25">
    <location>
        <begin position="437"/>
        <end position="446"/>
    </location>
</feature>
<feature type="repeat" description="26">
    <location>
        <begin position="447"/>
        <end position="456"/>
    </location>
</feature>
<feature type="repeat" description="27">
    <location>
        <begin position="457"/>
        <end position="466"/>
    </location>
</feature>
<feature type="repeat" description="28">
    <location>
        <begin position="467"/>
        <end position="476"/>
    </location>
</feature>
<feature type="repeat" description="29">
    <location>
        <begin position="477"/>
        <end position="486"/>
    </location>
</feature>
<feature type="repeat" description="30">
    <location>
        <begin position="487"/>
        <end position="496"/>
    </location>
</feature>
<feature type="repeat" description="31">
    <location>
        <begin position="497"/>
        <end position="506"/>
    </location>
</feature>
<feature type="repeat" description="32">
    <location>
        <begin position="507"/>
        <end position="516"/>
    </location>
</feature>
<feature type="repeat" description="33">
    <location>
        <begin position="517"/>
        <end position="526"/>
    </location>
</feature>
<feature type="repeat" description="34">
    <location>
        <begin position="527"/>
        <end position="536"/>
    </location>
</feature>
<feature type="repeat" description="35">
    <location>
        <begin position="537"/>
        <end position="546"/>
    </location>
</feature>
<feature type="repeat" description="36">
    <location>
        <begin position="547"/>
        <end position="556"/>
    </location>
</feature>
<feature type="repeat" description="37">
    <location>
        <begin position="557"/>
        <end position="566"/>
    </location>
</feature>
<feature type="repeat" description="38">
    <location>
        <begin position="567"/>
        <end position="576"/>
    </location>
</feature>
<feature type="repeat" description="39">
    <location>
        <begin position="577"/>
        <end position="586"/>
    </location>
</feature>
<feature type="repeat" description="40">
    <location>
        <begin position="587"/>
        <end position="596"/>
    </location>
</feature>
<feature type="repeat" description="41">
    <location>
        <begin position="597"/>
        <end position="606"/>
    </location>
</feature>
<feature type="repeat" description="42">
    <location>
        <begin position="607"/>
        <end position="616"/>
    </location>
</feature>
<feature type="repeat" description="43">
    <location>
        <begin position="617"/>
        <end position="626"/>
    </location>
</feature>
<feature type="repeat" description="44">
    <location>
        <begin position="627"/>
        <end position="636"/>
    </location>
</feature>
<feature type="repeat" description="45">
    <location>
        <begin position="637"/>
        <end position="646"/>
    </location>
</feature>
<feature type="repeat" description="46">
    <location>
        <begin position="647"/>
        <end position="656"/>
    </location>
</feature>
<feature type="repeat" description="47">
    <location>
        <begin position="657"/>
        <end position="666"/>
    </location>
</feature>
<feature type="repeat" description="48">
    <location>
        <begin position="667"/>
        <end position="676"/>
    </location>
</feature>
<feature type="repeat" description="49">
    <location>
        <begin position="677"/>
        <end position="686"/>
    </location>
</feature>
<feature type="repeat" description="50">
    <location>
        <begin position="687"/>
        <end position="696"/>
    </location>
</feature>
<feature type="repeat" description="51">
    <location>
        <begin position="697"/>
        <end position="706"/>
    </location>
</feature>
<feature type="repeat" description="52">
    <location>
        <begin position="707"/>
        <end position="716"/>
    </location>
</feature>
<feature type="repeat" description="53">
    <location>
        <begin position="717"/>
        <end position="726"/>
    </location>
</feature>
<feature type="repeat" description="54">
    <location>
        <begin position="727"/>
        <end position="736"/>
    </location>
</feature>
<feature type="region of interest" description="Disordered" evidence="4">
    <location>
        <begin position="45"/>
        <end position="91"/>
    </location>
</feature>
<feature type="region of interest" description="Disordered" evidence="4">
    <location>
        <begin position="125"/>
        <end position="152"/>
    </location>
</feature>
<feature type="region of interest" description="Disordered" evidence="4">
    <location>
        <begin position="173"/>
        <end position="780"/>
    </location>
</feature>
<feature type="region of interest" description="54 X 10 AA tandem repeats of [NASG]-[QL]-[GS]-[KRT]-[KR]-[AVTSEG]-[ED]-[AGVLS]-[ATGSV]-[PQLSA]">
    <location>
        <begin position="197"/>
        <end position="736"/>
    </location>
</feature>
<feature type="region of interest" description="Disordered" evidence="4">
    <location>
        <begin position="968"/>
        <end position="987"/>
    </location>
</feature>
<feature type="region of interest" description="Disordered" evidence="4">
    <location>
        <begin position="1021"/>
        <end position="1082"/>
    </location>
</feature>
<feature type="region of interest" description="Disordered" evidence="4">
    <location>
        <begin position="1224"/>
        <end position="1251"/>
    </location>
</feature>
<feature type="region of interest" description="Disordered" evidence="4">
    <location>
        <begin position="1391"/>
        <end position="1416"/>
    </location>
</feature>
<feature type="region of interest" description="Disordered" evidence="4">
    <location>
        <begin position="1509"/>
        <end position="1534"/>
    </location>
</feature>
<feature type="compositionally biased region" description="Basic residues" evidence="4">
    <location>
        <begin position="52"/>
        <end position="63"/>
    </location>
</feature>
<feature type="compositionally biased region" description="Basic and acidic residues" evidence="4">
    <location>
        <begin position="64"/>
        <end position="88"/>
    </location>
</feature>
<feature type="compositionally biased region" description="Low complexity" evidence="4">
    <location>
        <begin position="125"/>
        <end position="135"/>
    </location>
</feature>
<feature type="compositionally biased region" description="Low complexity" evidence="4">
    <location>
        <begin position="175"/>
        <end position="194"/>
    </location>
</feature>
<feature type="compositionally biased region" description="Polar residues" evidence="4">
    <location>
        <begin position="395"/>
        <end position="428"/>
    </location>
</feature>
<feature type="compositionally biased region" description="Polar residues" evidence="4">
    <location>
        <begin position="474"/>
        <end position="499"/>
    </location>
</feature>
<feature type="compositionally biased region" description="Polar residues" evidence="4">
    <location>
        <begin position="705"/>
        <end position="718"/>
    </location>
</feature>
<feature type="compositionally biased region" description="Basic and acidic residues" evidence="4">
    <location>
        <begin position="1059"/>
        <end position="1080"/>
    </location>
</feature>
<feature type="compositionally biased region" description="Basic and acidic residues" evidence="4">
    <location>
        <begin position="1509"/>
        <end position="1528"/>
    </location>
</feature>
<feature type="modified residue" description="Phosphoserine" evidence="1">
    <location>
        <position position="159"/>
    </location>
</feature>
<feature type="modified residue" description="Phosphoserine" evidence="1">
    <location>
        <position position="165"/>
    </location>
</feature>
<feature type="modified residue" description="Phosphothreonine" evidence="2">
    <location>
        <position position="275"/>
    </location>
</feature>
<feature type="modified residue" description="Phosphoserine" evidence="2">
    <location>
        <position position="715"/>
    </location>
</feature>
<feature type="modified residue" description="Phosphoserine" evidence="2">
    <location>
        <position position="747"/>
    </location>
</feature>
<feature type="modified residue" description="Phosphoserine" evidence="2">
    <location>
        <position position="1032"/>
    </location>
</feature>
<feature type="modified residue" description="N6-acetyllysine" evidence="1">
    <location>
        <position position="1064"/>
    </location>
</feature>
<feature type="modified residue" description="Phosphoserine" evidence="2">
    <location>
        <position position="1091"/>
    </location>
</feature>
<feature type="modified residue" description="Phosphoserine" evidence="2">
    <location>
        <position position="1110"/>
    </location>
</feature>
<feature type="cross-link" description="Glycyl lysine isopeptide (Lys-Gly) (interchain with G-Cter in SUMO2)" evidence="2">
    <location>
        <position position="148"/>
    </location>
</feature>
<feature type="cross-link" description="Glycyl lysine isopeptide (Lys-Gly) (interchain with G-Cter in SUMO1)" evidence="2">
    <location>
        <position position="752"/>
    </location>
</feature>
<name>RRBP1_CANLF</name>
<organism>
    <name type="scientific">Canis lupus familiaris</name>
    <name type="common">Dog</name>
    <name type="synonym">Canis familiaris</name>
    <dbReference type="NCBI Taxonomy" id="9615"/>
    <lineage>
        <taxon>Eukaryota</taxon>
        <taxon>Metazoa</taxon>
        <taxon>Chordata</taxon>
        <taxon>Craniata</taxon>
        <taxon>Vertebrata</taxon>
        <taxon>Euteleostomi</taxon>
        <taxon>Mammalia</taxon>
        <taxon>Eutheria</taxon>
        <taxon>Laurasiatheria</taxon>
        <taxon>Carnivora</taxon>
        <taxon>Caniformia</taxon>
        <taxon>Canidae</taxon>
        <taxon>Canis</taxon>
    </lineage>
</organism>
<proteinExistence type="evidence at transcript level"/>
<keyword id="KW-0007">Acetylation</keyword>
<keyword id="KW-0256">Endoplasmic reticulum</keyword>
<keyword id="KW-1017">Isopeptide bond</keyword>
<keyword id="KW-0472">Membrane</keyword>
<keyword id="KW-0597">Phosphoprotein</keyword>
<keyword id="KW-0653">Protein transport</keyword>
<keyword id="KW-1185">Reference proteome</keyword>
<keyword id="KW-0677">Repeat</keyword>
<keyword id="KW-0811">Translocation</keyword>
<keyword id="KW-0812">Transmembrane</keyword>
<keyword id="KW-1133">Transmembrane helix</keyword>
<keyword id="KW-0813">Transport</keyword>
<keyword id="KW-0832">Ubl conjugation</keyword>
<protein>
    <recommendedName>
        <fullName>Ribosome-binding protein 1</fullName>
    </recommendedName>
    <alternativeName>
        <fullName>180 kDa ribosome receptor</fullName>
        <shortName>RRp</shortName>
    </alternativeName>
</protein>
<dbReference type="EMBL" id="X87224">
    <property type="protein sequence ID" value="CAA60676.1"/>
    <property type="molecule type" value="mRNA"/>
</dbReference>
<dbReference type="PIR" id="A56734">
    <property type="entry name" value="A56734"/>
</dbReference>
<dbReference type="RefSeq" id="NP_001003179.1">
    <property type="nucleotide sequence ID" value="NM_001003179.1"/>
</dbReference>
<dbReference type="SMR" id="Q28298"/>
<dbReference type="BioGRID" id="139730">
    <property type="interactions" value="2"/>
</dbReference>
<dbReference type="FunCoup" id="Q28298">
    <property type="interactions" value="482"/>
</dbReference>
<dbReference type="STRING" id="9615.ENSCAFP00000034278"/>
<dbReference type="PaxDb" id="9612-ENSCAFP00000034278"/>
<dbReference type="eggNOG" id="KOG1999">
    <property type="taxonomic scope" value="Eukaryota"/>
</dbReference>
<dbReference type="InParanoid" id="Q28298"/>
<dbReference type="OrthoDB" id="6410656at2759"/>
<dbReference type="Proteomes" id="UP000002254">
    <property type="component" value="Unplaced"/>
</dbReference>
<dbReference type="Proteomes" id="UP000694429">
    <property type="component" value="Unplaced"/>
</dbReference>
<dbReference type="Proteomes" id="UP000694542">
    <property type="component" value="Unplaced"/>
</dbReference>
<dbReference type="Proteomes" id="UP000805418">
    <property type="component" value="Unplaced"/>
</dbReference>
<dbReference type="GO" id="GO:0005789">
    <property type="term" value="C:endoplasmic reticulum membrane"/>
    <property type="evidence" value="ECO:0000314"/>
    <property type="project" value="UniProtKB"/>
</dbReference>
<dbReference type="GO" id="GO:0015031">
    <property type="term" value="P:protein transport"/>
    <property type="evidence" value="ECO:0007669"/>
    <property type="project" value="UniProtKB-KW"/>
</dbReference>
<dbReference type="GO" id="GO:0007165">
    <property type="term" value="P:signal transduction"/>
    <property type="evidence" value="ECO:0000314"/>
    <property type="project" value="UniProtKB"/>
</dbReference>
<dbReference type="FunFam" id="1.10.287.1490:FF:000010">
    <property type="entry name" value="Ribosome binding protein 1"/>
    <property type="match status" value="1"/>
</dbReference>
<dbReference type="InterPro" id="IPR007794">
    <property type="entry name" value="Rib_rcpt_KP"/>
</dbReference>
<dbReference type="InterPro" id="IPR040248">
    <property type="entry name" value="RRBP1"/>
</dbReference>
<dbReference type="PANTHER" id="PTHR18939">
    <property type="entry name" value="RIBOSOME BINDING PROTEIN-1"/>
    <property type="match status" value="1"/>
</dbReference>
<dbReference type="PANTHER" id="PTHR18939:SF4">
    <property type="entry name" value="RIBOSOME-BINDING PROTEIN 1"/>
    <property type="match status" value="1"/>
</dbReference>
<dbReference type="Pfam" id="PF05104">
    <property type="entry name" value="Rib_recp_KP_reg"/>
    <property type="match status" value="2"/>
</dbReference>
<gene>
    <name type="primary">RRBP1</name>
    <name type="synonym">P180</name>
</gene>
<accession>Q28298</accession>
<evidence type="ECO:0000250" key="1">
    <source>
        <dbReference type="UniProtKB" id="Q99PL5"/>
    </source>
</evidence>
<evidence type="ECO:0000250" key="2">
    <source>
        <dbReference type="UniProtKB" id="Q9P2E9"/>
    </source>
</evidence>
<evidence type="ECO:0000255" key="3"/>
<evidence type="ECO:0000256" key="4">
    <source>
        <dbReference type="SAM" id="MobiDB-lite"/>
    </source>
</evidence>
<evidence type="ECO:0000269" key="5">
    <source>
    </source>
</evidence>